<name>AUHM_HUMAN</name>
<evidence type="ECO:0000250" key="1">
    <source>
        <dbReference type="UniProtKB" id="Q9JLZ3"/>
    </source>
</evidence>
<evidence type="ECO:0000269" key="2">
    <source>
    </source>
</evidence>
<evidence type="ECO:0000269" key="3">
    <source>
    </source>
</evidence>
<evidence type="ECO:0000269" key="4">
    <source>
    </source>
</evidence>
<evidence type="ECO:0000269" key="5">
    <source>
    </source>
</evidence>
<evidence type="ECO:0000269" key="6">
    <source>
    </source>
</evidence>
<evidence type="ECO:0000303" key="7">
    <source>
    </source>
</evidence>
<evidence type="ECO:0000303" key="8">
    <source>
    </source>
</evidence>
<evidence type="ECO:0000303" key="9">
    <source>
    </source>
</evidence>
<evidence type="ECO:0000305" key="10"/>
<evidence type="ECO:0000305" key="11">
    <source>
    </source>
</evidence>
<evidence type="ECO:0000305" key="12">
    <source>
    </source>
</evidence>
<evidence type="ECO:0007829" key="13">
    <source>
        <dbReference type="PDB" id="1HZD"/>
    </source>
</evidence>
<proteinExistence type="evidence at protein level"/>
<keyword id="KW-0002">3D-structure</keyword>
<keyword id="KW-0007">Acetylation</keyword>
<keyword id="KW-0025">Alternative splicing</keyword>
<keyword id="KW-0101">Branched-chain amino acid catabolism</keyword>
<keyword id="KW-0903">Direct protein sequencing</keyword>
<keyword id="KW-0225">Disease variant</keyword>
<keyword id="KW-0456">Lyase</keyword>
<keyword id="KW-0496">Mitochondrion</keyword>
<keyword id="KW-1267">Proteomics identification</keyword>
<keyword id="KW-1185">Reference proteome</keyword>
<keyword id="KW-0694">RNA-binding</keyword>
<keyword id="KW-0809">Transit peptide</keyword>
<feature type="transit peptide" description="Mitochondrion" evidence="6">
    <location>
        <begin position="1"/>
        <end position="67"/>
    </location>
</feature>
<feature type="chain" id="PRO_0000007415" description="Methylglutaconyl-CoA hydratase, mitochondrial">
    <location>
        <begin position="68"/>
        <end position="339"/>
    </location>
</feature>
<feature type="region of interest" description="RNA-binding" evidence="2">
    <location>
        <begin position="105"/>
        <end position="119"/>
    </location>
</feature>
<feature type="modified residue" description="N6-acetyllysine; alternate" evidence="1">
    <location>
        <position position="100"/>
    </location>
</feature>
<feature type="modified residue" description="N6-succinyllysine; alternate" evidence="1">
    <location>
        <position position="100"/>
    </location>
</feature>
<feature type="modified residue" description="N6-succinyllysine" evidence="1">
    <location>
        <position position="109"/>
    </location>
</feature>
<feature type="modified residue" description="N6-acetyllysine; alternate" evidence="1">
    <location>
        <position position="113"/>
    </location>
</feature>
<feature type="modified residue" description="N6-succinyllysine; alternate" evidence="1">
    <location>
        <position position="113"/>
    </location>
</feature>
<feature type="modified residue" description="N6-acetyllysine; alternate" evidence="1">
    <location>
        <position position="144"/>
    </location>
</feature>
<feature type="modified residue" description="N6-succinyllysine; alternate" evidence="1">
    <location>
        <position position="144"/>
    </location>
</feature>
<feature type="modified residue" description="N6-succinyllysine" evidence="1">
    <location>
        <position position="148"/>
    </location>
</feature>
<feature type="modified residue" description="N6-succinyllysine" evidence="1">
    <location>
        <position position="160"/>
    </location>
</feature>
<feature type="modified residue" description="N6-acetyllysine; alternate" evidence="1">
    <location>
        <position position="204"/>
    </location>
</feature>
<feature type="modified residue" description="N6-succinyllysine; alternate" evidence="1">
    <location>
        <position position="204"/>
    </location>
</feature>
<feature type="modified residue" description="N6-acetyllysine; alternate" evidence="1">
    <location>
        <position position="211"/>
    </location>
</feature>
<feature type="modified residue" description="N6-succinyllysine; alternate" evidence="1">
    <location>
        <position position="211"/>
    </location>
</feature>
<feature type="modified residue" description="N6-succinyllysine" evidence="1">
    <location>
        <position position="329"/>
    </location>
</feature>
<feature type="splice variant" id="VSP_008336" description="In isoform 2." evidence="7">
    <location>
        <begin position="140"/>
        <end position="168"/>
    </location>
</feature>
<feature type="sequence variant" id="VAR_016911" description="In MGCA1; decreased methylglutaconyl-CoA hydratase activity; dbSNP:rs769894315." evidence="4 5">
    <original>A</original>
    <variation>V</variation>
    <location>
        <position position="240"/>
    </location>
</feature>
<feature type="mutagenesis site" description="Abolishes RNA-binding; when associated with E-109 and Q-113." evidence="2">
    <original>K</original>
    <variation>N</variation>
    <location>
        <position position="105"/>
    </location>
</feature>
<feature type="mutagenesis site" description="Abolishes RNA-binding; when associated with N-105 and Q-113." evidence="2">
    <original>K</original>
    <variation>E</variation>
    <location>
        <position position="109"/>
    </location>
</feature>
<feature type="mutagenesis site" description="Abolishes RNA-binding; when associated with N-105 and E-109." evidence="2">
    <original>K</original>
    <variation>Q</variation>
    <location>
        <position position="113"/>
    </location>
</feature>
<feature type="strand" evidence="13">
    <location>
        <begin position="76"/>
        <end position="81"/>
    </location>
</feature>
<feature type="helix" evidence="13">
    <location>
        <begin position="84"/>
        <end position="86"/>
    </location>
</feature>
<feature type="strand" evidence="13">
    <location>
        <begin position="89"/>
        <end position="94"/>
    </location>
</feature>
<feature type="helix" evidence="13">
    <location>
        <begin position="97"/>
        <end position="99"/>
    </location>
</feature>
<feature type="helix" evidence="13">
    <location>
        <begin position="107"/>
        <end position="120"/>
    </location>
</feature>
<feature type="strand" evidence="13">
    <location>
        <begin position="125"/>
        <end position="133"/>
    </location>
</feature>
<feature type="strand" evidence="13">
    <location>
        <begin position="135"/>
        <end position="138"/>
    </location>
</feature>
<feature type="helix" evidence="13">
    <location>
        <begin position="143"/>
        <end position="146"/>
    </location>
</feature>
<feature type="helix" evidence="13">
    <location>
        <begin position="151"/>
        <end position="169"/>
    </location>
</feature>
<feature type="strand" evidence="13">
    <location>
        <begin position="175"/>
        <end position="184"/>
    </location>
</feature>
<feature type="helix" evidence="13">
    <location>
        <begin position="186"/>
        <end position="193"/>
    </location>
</feature>
<feature type="strand" evidence="13">
    <location>
        <begin position="194"/>
        <end position="200"/>
    </location>
</feature>
<feature type="strand" evidence="13">
    <location>
        <begin position="204"/>
        <end position="206"/>
    </location>
</feature>
<feature type="helix" evidence="13">
    <location>
        <begin position="209"/>
        <end position="212"/>
    </location>
</feature>
<feature type="helix" evidence="13">
    <location>
        <begin position="220"/>
        <end position="228"/>
    </location>
</feature>
<feature type="helix" evidence="13">
    <location>
        <begin position="230"/>
        <end position="239"/>
    </location>
</feature>
<feature type="strand" evidence="13">
    <location>
        <begin position="242"/>
        <end position="244"/>
    </location>
</feature>
<feature type="helix" evidence="13">
    <location>
        <begin position="245"/>
        <end position="250"/>
    </location>
</feature>
<feature type="strand" evidence="13">
    <location>
        <begin position="255"/>
        <end position="258"/>
    </location>
</feature>
<feature type="helix" evidence="13">
    <location>
        <begin position="266"/>
        <end position="276"/>
    </location>
</feature>
<feature type="turn" evidence="13">
    <location>
        <begin position="277"/>
        <end position="280"/>
    </location>
</feature>
<feature type="helix" evidence="13">
    <location>
        <begin position="283"/>
        <end position="297"/>
    </location>
</feature>
<feature type="helix" evidence="13">
    <location>
        <begin position="301"/>
        <end position="313"/>
    </location>
</feature>
<feature type="turn" evidence="13">
    <location>
        <begin position="314"/>
        <end position="317"/>
    </location>
</feature>
<feature type="helix" evidence="13">
    <location>
        <begin position="319"/>
        <end position="328"/>
    </location>
</feature>
<feature type="turn" evidence="13">
    <location>
        <begin position="329"/>
        <end position="331"/>
    </location>
</feature>
<protein>
    <recommendedName>
        <fullName evidence="8">Methylglutaconyl-CoA hydratase, mitochondrial</fullName>
        <shortName evidence="8">3-MG-CoA hydratase</shortName>
        <ecNumber evidence="3 5">4.2.1.18</ecNumber>
    </recommendedName>
    <alternativeName>
        <fullName>AU-specific RNA-binding enoyl-CoA hydratase</fullName>
        <shortName>AU-binding protein/enoyl-CoA hydratase</shortName>
    </alternativeName>
    <alternativeName>
        <fullName evidence="9">Itaconyl-CoA hydratase</fullName>
        <ecNumber evidence="9">4.2.1.56</ecNumber>
    </alternativeName>
</protein>
<dbReference type="EC" id="4.2.1.18" evidence="3 5"/>
<dbReference type="EC" id="4.2.1.56" evidence="9"/>
<dbReference type="EMBL" id="X79888">
    <property type="protein sequence ID" value="CAA56260.1"/>
    <property type="molecule type" value="mRNA"/>
</dbReference>
<dbReference type="EMBL" id="AL158071">
    <property type="status" value="NOT_ANNOTATED_CDS"/>
    <property type="molecule type" value="Genomic_DNA"/>
</dbReference>
<dbReference type="EMBL" id="AL513353">
    <property type="status" value="NOT_ANNOTATED_CDS"/>
    <property type="molecule type" value="Genomic_DNA"/>
</dbReference>
<dbReference type="EMBL" id="AL353645">
    <property type="status" value="NOT_ANNOTATED_CDS"/>
    <property type="molecule type" value="Genomic_DNA"/>
</dbReference>
<dbReference type="EMBL" id="CH471089">
    <property type="protein sequence ID" value="EAW62794.1"/>
    <property type="molecule type" value="Genomic_DNA"/>
</dbReference>
<dbReference type="EMBL" id="CH471089">
    <property type="protein sequence ID" value="EAW62795.1"/>
    <property type="molecule type" value="Genomic_DNA"/>
</dbReference>
<dbReference type="EMBL" id="BC020722">
    <property type="protein sequence ID" value="AAH20722.1"/>
    <property type="molecule type" value="mRNA"/>
</dbReference>
<dbReference type="CCDS" id="CCDS6689.1">
    <molecule id="Q13825-1"/>
</dbReference>
<dbReference type="CCDS" id="CCDS78409.1">
    <molecule id="Q13825-2"/>
</dbReference>
<dbReference type="PIR" id="I37195">
    <property type="entry name" value="I37195"/>
</dbReference>
<dbReference type="RefSeq" id="NP_001293119.1">
    <molecule id="Q13825-2"/>
    <property type="nucleotide sequence ID" value="NM_001306190.2"/>
</dbReference>
<dbReference type="RefSeq" id="NP_001689.1">
    <molecule id="Q13825-1"/>
    <property type="nucleotide sequence ID" value="NM_001698.3"/>
</dbReference>
<dbReference type="PDB" id="1HZD">
    <property type="method" value="X-ray"/>
    <property type="resolution" value="2.20 A"/>
    <property type="chains" value="A/B/C/D/E/F=68-339"/>
</dbReference>
<dbReference type="PDB" id="2ZQQ">
    <property type="method" value="X-ray"/>
    <property type="resolution" value="2.20 A"/>
    <property type="chains" value="A/B/C/D/E/F=68-339"/>
</dbReference>
<dbReference type="PDB" id="2ZQR">
    <property type="method" value="X-ray"/>
    <property type="resolution" value="2.50 A"/>
    <property type="chains" value="A/B/C/D/E/F=68-339"/>
</dbReference>
<dbReference type="PDBsum" id="1HZD"/>
<dbReference type="PDBsum" id="2ZQQ"/>
<dbReference type="PDBsum" id="2ZQR"/>
<dbReference type="SMR" id="Q13825"/>
<dbReference type="BioGRID" id="107030">
    <property type="interactions" value="306"/>
</dbReference>
<dbReference type="FunCoup" id="Q13825">
    <property type="interactions" value="1225"/>
</dbReference>
<dbReference type="IntAct" id="Q13825">
    <property type="interactions" value="12"/>
</dbReference>
<dbReference type="STRING" id="9606.ENSP00000364883"/>
<dbReference type="MoonProt" id="Q13825"/>
<dbReference type="iPTMnet" id="Q13825"/>
<dbReference type="PhosphoSitePlus" id="Q13825"/>
<dbReference type="BioMuta" id="AUH"/>
<dbReference type="DMDM" id="37076898"/>
<dbReference type="jPOST" id="Q13825"/>
<dbReference type="MassIVE" id="Q13825"/>
<dbReference type="PaxDb" id="9606-ENSP00000364883"/>
<dbReference type="PeptideAtlas" id="Q13825"/>
<dbReference type="ProteomicsDB" id="59696">
    <molecule id="Q13825-1"/>
</dbReference>
<dbReference type="ProteomicsDB" id="59697">
    <molecule id="Q13825-2"/>
</dbReference>
<dbReference type="Pumba" id="Q13825"/>
<dbReference type="TopDownProteomics" id="Q13825-1">
    <molecule id="Q13825-1"/>
</dbReference>
<dbReference type="TopDownProteomics" id="Q13825-2">
    <molecule id="Q13825-2"/>
</dbReference>
<dbReference type="Antibodypedia" id="1316">
    <property type="antibodies" value="141 antibodies from 27 providers"/>
</dbReference>
<dbReference type="DNASU" id="549"/>
<dbReference type="Ensembl" id="ENST00000303617.5">
    <molecule id="Q13825-2"/>
    <property type="protein sequence ID" value="ENSP00000307334.5"/>
    <property type="gene ID" value="ENSG00000148090.12"/>
</dbReference>
<dbReference type="Ensembl" id="ENST00000375731.9">
    <molecule id="Q13825-1"/>
    <property type="protein sequence ID" value="ENSP00000364883.5"/>
    <property type="gene ID" value="ENSG00000148090.12"/>
</dbReference>
<dbReference type="GeneID" id="549"/>
<dbReference type="KEGG" id="hsa:549"/>
<dbReference type="MANE-Select" id="ENST00000375731.9">
    <property type="protein sequence ID" value="ENSP00000364883.5"/>
    <property type="RefSeq nucleotide sequence ID" value="NM_001698.3"/>
    <property type="RefSeq protein sequence ID" value="NP_001689.1"/>
</dbReference>
<dbReference type="UCSC" id="uc004arf.5">
    <molecule id="Q13825-1"/>
    <property type="organism name" value="human"/>
</dbReference>
<dbReference type="AGR" id="HGNC:890"/>
<dbReference type="CTD" id="549"/>
<dbReference type="DisGeNET" id="549"/>
<dbReference type="GeneCards" id="AUH"/>
<dbReference type="HGNC" id="HGNC:890">
    <property type="gene designation" value="AUH"/>
</dbReference>
<dbReference type="HPA" id="ENSG00000148090">
    <property type="expression patterns" value="Low tissue specificity"/>
</dbReference>
<dbReference type="MalaCards" id="AUH"/>
<dbReference type="MIM" id="250950">
    <property type="type" value="phenotype"/>
</dbReference>
<dbReference type="MIM" id="600529">
    <property type="type" value="gene"/>
</dbReference>
<dbReference type="neXtProt" id="NX_Q13825"/>
<dbReference type="OpenTargets" id="ENSG00000148090"/>
<dbReference type="Orphanet" id="67046">
    <property type="disease" value="3-methylglutaconic aciduria type 1"/>
</dbReference>
<dbReference type="PharmGKB" id="PA25181"/>
<dbReference type="VEuPathDB" id="HostDB:ENSG00000148090"/>
<dbReference type="eggNOG" id="KOG1679">
    <property type="taxonomic scope" value="Eukaryota"/>
</dbReference>
<dbReference type="GeneTree" id="ENSGT00940000157484"/>
<dbReference type="HOGENOM" id="CLU_009834_7_6_1"/>
<dbReference type="InParanoid" id="Q13825"/>
<dbReference type="OMA" id="YEQAHAW"/>
<dbReference type="OrthoDB" id="410701at2759"/>
<dbReference type="PAN-GO" id="Q13825">
    <property type="GO annotations" value="3 GO annotations based on evolutionary models"/>
</dbReference>
<dbReference type="PhylomeDB" id="Q13825"/>
<dbReference type="TreeFam" id="TF314276"/>
<dbReference type="BioCyc" id="MetaCyc:HS07490-MONOMER"/>
<dbReference type="BRENDA" id="4.2.1.18">
    <property type="organism ID" value="2681"/>
</dbReference>
<dbReference type="PathwayCommons" id="Q13825"/>
<dbReference type="Reactome" id="R-HSA-70895">
    <property type="pathway name" value="Branched-chain amino acid catabolism"/>
</dbReference>
<dbReference type="Reactome" id="R-HSA-9914274">
    <property type="pathway name" value="3-methylglutaconic aciduria"/>
</dbReference>
<dbReference type="SABIO-RK" id="Q13825"/>
<dbReference type="SignaLink" id="Q13825"/>
<dbReference type="UniPathway" id="UPA00363">
    <property type="reaction ID" value="UER00862"/>
</dbReference>
<dbReference type="BioGRID-ORCS" id="549">
    <property type="hits" value="8 hits in 1159 CRISPR screens"/>
</dbReference>
<dbReference type="CD-CODE" id="FB4E32DD">
    <property type="entry name" value="Presynaptic clusters and postsynaptic densities"/>
</dbReference>
<dbReference type="ChiTaRS" id="AUH">
    <property type="organism name" value="human"/>
</dbReference>
<dbReference type="EvolutionaryTrace" id="Q13825"/>
<dbReference type="GenomeRNAi" id="549"/>
<dbReference type="Pharos" id="Q13825">
    <property type="development level" value="Tbio"/>
</dbReference>
<dbReference type="PRO" id="PR:Q13825"/>
<dbReference type="Proteomes" id="UP000005640">
    <property type="component" value="Chromosome 9"/>
</dbReference>
<dbReference type="RNAct" id="Q13825">
    <property type="molecule type" value="protein"/>
</dbReference>
<dbReference type="Bgee" id="ENSG00000148090">
    <property type="expression patterns" value="Expressed in renal medulla and 198 other cell types or tissues"/>
</dbReference>
<dbReference type="GO" id="GO:0005759">
    <property type="term" value="C:mitochondrial matrix"/>
    <property type="evidence" value="ECO:0000304"/>
    <property type="project" value="Reactome"/>
</dbReference>
<dbReference type="GO" id="GO:0005739">
    <property type="term" value="C:mitochondrion"/>
    <property type="evidence" value="ECO:0006056"/>
    <property type="project" value="FlyBase"/>
</dbReference>
<dbReference type="GO" id="GO:0004300">
    <property type="term" value="F:enoyl-CoA hydratase activity"/>
    <property type="evidence" value="ECO:0000314"/>
    <property type="project" value="UniProtKB"/>
</dbReference>
<dbReference type="GO" id="GO:0050011">
    <property type="term" value="F:itaconyl-CoA hydratase activity"/>
    <property type="evidence" value="ECO:0007669"/>
    <property type="project" value="UniProtKB-EC"/>
</dbReference>
<dbReference type="GO" id="GO:0004490">
    <property type="term" value="F:methylglutaconyl-CoA hydratase activity"/>
    <property type="evidence" value="ECO:0000314"/>
    <property type="project" value="FlyBase"/>
</dbReference>
<dbReference type="GO" id="GO:0003730">
    <property type="term" value="F:mRNA 3'-UTR binding"/>
    <property type="evidence" value="ECO:0000314"/>
    <property type="project" value="UniProtKB"/>
</dbReference>
<dbReference type="GO" id="GO:0006635">
    <property type="term" value="P:fatty acid beta-oxidation"/>
    <property type="evidence" value="ECO:0000318"/>
    <property type="project" value="GO_Central"/>
</dbReference>
<dbReference type="GO" id="GO:0006552">
    <property type="term" value="P:L-leucine catabolic process"/>
    <property type="evidence" value="ECO:0007669"/>
    <property type="project" value="UniProtKB-UniPathway"/>
</dbReference>
<dbReference type="CDD" id="cd06558">
    <property type="entry name" value="crotonase-like"/>
    <property type="match status" value="1"/>
</dbReference>
<dbReference type="FunFam" id="3.90.226.10:FF:000022">
    <property type="entry name" value="methylglutaconyl-CoA hydratase, mitochondrial isoform X1"/>
    <property type="match status" value="1"/>
</dbReference>
<dbReference type="FunFam" id="1.10.12.10:FF:000001">
    <property type="entry name" value="Probable enoyl-CoA hydratase, mitochondrial"/>
    <property type="match status" value="1"/>
</dbReference>
<dbReference type="Gene3D" id="3.90.226.10">
    <property type="entry name" value="2-enoyl-CoA Hydratase, Chain A, domain 1"/>
    <property type="match status" value="1"/>
</dbReference>
<dbReference type="Gene3D" id="1.10.12.10">
    <property type="entry name" value="Lyase 2-enoyl-coa Hydratase, Chain A, domain 2"/>
    <property type="match status" value="1"/>
</dbReference>
<dbReference type="InterPro" id="IPR029045">
    <property type="entry name" value="ClpP/crotonase-like_dom_sf"/>
</dbReference>
<dbReference type="InterPro" id="IPR018376">
    <property type="entry name" value="Enoyl-CoA_hyd/isom_CS"/>
</dbReference>
<dbReference type="InterPro" id="IPR001753">
    <property type="entry name" value="Enoyl-CoA_hydra/iso"/>
</dbReference>
<dbReference type="InterPro" id="IPR014748">
    <property type="entry name" value="Enoyl-CoA_hydra_C"/>
</dbReference>
<dbReference type="PANTHER" id="PTHR11941">
    <property type="entry name" value="ENOYL-COA HYDRATASE-RELATED"/>
    <property type="match status" value="1"/>
</dbReference>
<dbReference type="PANTHER" id="PTHR11941:SF12">
    <property type="entry name" value="METHYLGLUTACONYL-COA HYDRATASE, MITOCHONDRIAL"/>
    <property type="match status" value="1"/>
</dbReference>
<dbReference type="Pfam" id="PF00378">
    <property type="entry name" value="ECH_1"/>
    <property type="match status" value="1"/>
</dbReference>
<dbReference type="SUPFAM" id="SSF52096">
    <property type="entry name" value="ClpP/crotonase"/>
    <property type="match status" value="1"/>
</dbReference>
<dbReference type="PROSITE" id="PS00166">
    <property type="entry name" value="ENOYL_COA_HYDRATASE"/>
    <property type="match status" value="1"/>
</dbReference>
<comment type="function">
    <text evidence="2 3 4 5 6 8 9">Catalyzes the fifth step in the leucine degradation pathway, the reversible hydration of 3-methylglutaconyl-CoA (3-MG-CoA) to 3-hydroxy-3-methylglutaryl-CoA (HMG-CoA) (PubMed:11738050, PubMed:12434311, PubMed:12655555, PubMed:16640564). Can catalyze the reverse reaction but at a much lower rate in vitro (PubMed:16640564). HMG-CoA is then quickly degraded by another enzyme (such as HMG-CoA lyase) to give acetyl-CoA and acetoacetate (PubMed:16640564). Uses other substrates such as (2E)-glutaconyl-CoA efficiently in vitro, and to a lesser extent 3-methylcrotonyl-CoA (3-methyl-(2E)-butenoyl-CoA), crotonyl-CoA ((2E)-butenoyl-CoA) and 3-hydroxybutanoyl-CoA (the missing carboxylate reduces affinity to the active site) (PubMed:16640564). Originally it was identified as an RNA-binding protein as it binds to AU-rich elements (AREs) in vitro (PubMed:7892223). AREs direct rapid RNA degradation and mRNA deadenylation (PubMed:7892223). Might have itaconyl-CoA hydratase activity, converting itaconyl-CoA into citramalyl-CoA in the C5-dicarboxylate catabolism pathway (PubMed:29056341). The C5-dicarboxylate catabolism pathway is required to detoxify itaconate, an antimicrobial metabolite and immunomodulator produced by macrophages during certain infections, that can act as a vitamin B12-poisoning metabolite (PubMed:29056341).</text>
</comment>
<comment type="catalytic activity">
    <reaction evidence="3 5">
        <text>(3S)-3-hydroxy-3-methylglutaryl-CoA = 3-methyl-(2E)-glutaconyl-CoA + H2O</text>
        <dbReference type="Rhea" id="RHEA:21536"/>
        <dbReference type="ChEBI" id="CHEBI:15377"/>
        <dbReference type="ChEBI" id="CHEBI:43074"/>
        <dbReference type="ChEBI" id="CHEBI:57346"/>
        <dbReference type="EC" id="4.2.1.18"/>
    </reaction>
    <physiologicalReaction direction="right-to-left" evidence="5 11">
        <dbReference type="Rhea" id="RHEA:21538"/>
    </physiologicalReaction>
</comment>
<comment type="catalytic activity">
    <reaction evidence="9">
        <text>(3S)-citramalyl-CoA = itaconyl-CoA + H2O</text>
        <dbReference type="Rhea" id="RHEA:13785"/>
        <dbReference type="ChEBI" id="CHEBI:15377"/>
        <dbReference type="ChEBI" id="CHEBI:57381"/>
        <dbReference type="ChEBI" id="CHEBI:58668"/>
        <dbReference type="EC" id="4.2.1.56"/>
    </reaction>
    <physiologicalReaction direction="right-to-left" evidence="9">
        <dbReference type="Rhea" id="RHEA:13787"/>
    </physiologicalReaction>
</comment>
<comment type="catalytic activity">
    <reaction evidence="5">
        <text>3-hydroxyisovaleryl-CoA = 3-methylbut-2-enoyl-CoA + H2O</text>
        <dbReference type="Rhea" id="RHEA:31079"/>
        <dbReference type="ChEBI" id="CHEBI:15377"/>
        <dbReference type="ChEBI" id="CHEBI:57344"/>
        <dbReference type="ChEBI" id="CHEBI:62555"/>
    </reaction>
    <physiologicalReaction direction="right-to-left" evidence="5">
        <dbReference type="Rhea" id="RHEA:31081"/>
    </physiologicalReaction>
</comment>
<comment type="catalytic activity">
    <reaction evidence="5">
        <text>(S)-3-hydroxyglutaryl-CoA = (2E)-glutaconyl-CoA + H2O</text>
        <dbReference type="Rhea" id="RHEA:68456"/>
        <dbReference type="ChEBI" id="CHEBI:15377"/>
        <dbReference type="ChEBI" id="CHEBI:57353"/>
        <dbReference type="ChEBI" id="CHEBI:177916"/>
    </reaction>
    <physiologicalReaction direction="right-to-left" evidence="5">
        <dbReference type="Rhea" id="RHEA:68458"/>
    </physiologicalReaction>
</comment>
<comment type="biophysicochemical properties">
    <kinetics>
        <KM evidence="5">8.3 uM for (2E)-3-methylglutaconyl-CoA</KM>
        <KM evidence="5">2250 uM for 3-hydroxy-3-methylglutaryl-CoA</KM>
        <KM evidence="5">2.4 uM for (2E)-glutaconyl-CoA</KM>
        <KM evidence="5">12100 uM for crotonyl-CoA</KM>
        <KM evidence="5">55200 uM for 3-hydroxybutanoyl-CoA</KM>
        <KM evidence="5">347 uM for 3-methylcrotonyl-CoA</KM>
        <Vmax evidence="5">3.9 umol/min/mg enzyme using (2E)-3-methylglutaconyl-CoA as substrate</Vmax>
        <Vmax evidence="5">0.2 umol/min/mg enzyme using 3-hydroxy-3-methylglutaryl-CoA as substrate</Vmax>
        <Vmax evidence="5">1.1 umol/min/mg enzyme using (2E)-glutaconyl-CoA as substrate</Vmax>
        <Vmax evidence="5">5.2 umol/min/mg enzyme using crotonyl-CoA as substrate</Vmax>
        <Vmax evidence="5">1.3 umol/min/mg enzyme using 3-hydroxybutanoyl-CoA as substrate</Vmax>
        <Vmax evidence="5">2.2 umol/min/mg enzyme using 3-methylcrotonyl-CoA as substrate</Vmax>
    </kinetics>
</comment>
<comment type="pathway">
    <text evidence="11 12">Amino-acid degradation; L-leucine degradation; (S)-3-hydroxy-3-methylglutaryl-CoA from 3-isovaleryl-CoA: step 3/3.</text>
</comment>
<comment type="subunit">
    <text evidence="2">Homohexamer.</text>
</comment>
<comment type="subcellular location">
    <subcellularLocation>
        <location evidence="1">Mitochondrion</location>
    </subcellularLocation>
</comment>
<comment type="alternative products">
    <event type="alternative splicing"/>
    <isoform>
        <id>Q13825-1</id>
        <name>1</name>
        <sequence type="displayed"/>
    </isoform>
    <isoform>
        <id>Q13825-2</id>
        <name>2</name>
        <sequence type="described" ref="VSP_008336"/>
    </isoform>
</comment>
<comment type="disease" evidence="4 5">
    <disease id="DI-00004">
        <name>3-methylglutaconic aciduria 1</name>
        <acronym>MGCA1</acronym>
        <description>An inborn error of leucine metabolism. It leads to an autosomal recessive syndrome with variable clinical phenotype, ranging from delayed speech development to severe psychomotor retardation, coma, failure to thrive, metabolic acidosis and dystonia. MGCA1 can be distinguished from other forms of MGCA by the pattern of metabolite excretion: 3-methylglutaconic acid levels are higher than those detected in other forms, whereas methylglutaric acid levels are usually only slightly elevated and there is a high level of 3-hydroxyisovaleric acid excretion (not present in other MGCA forms).</description>
        <dbReference type="MIM" id="250950"/>
    </disease>
    <text>The disease is caused by variants affecting the gene represented in this entry.</text>
</comment>
<comment type="similarity">
    <text evidence="10">Belongs to the enoyl-CoA hydratase/isomerase family.</text>
</comment>
<accession>Q13825</accession>
<accession>B1ALV7</accession>
<accession>B1ALV8</accession>
<accession>Q8WUE4</accession>
<reference key="1">
    <citation type="journal article" date="1995" name="Proc. Natl. Acad. Sci. U.S.A.">
        <title>AUH, a gene encoding an AU-specific RNA binding protein with intrinsic enoyl-CoA hydratase activity.</title>
        <authorList>
            <person name="Nakagawa J."/>
            <person name="Waldner H.P."/>
            <person name="Meyer-Monard S."/>
            <person name="Hofsteenge J."/>
            <person name="Jenoe P."/>
            <person name="Moroni C."/>
        </authorList>
    </citation>
    <scope>NUCLEOTIDE SEQUENCE [MRNA] (ISOFORM 1)</scope>
    <scope>PROTEIN SEQUENCE OF 68-87; 213-215; 235-241; 251-268 AND 278-286</scope>
    <scope>FUNCTION</scope>
    <scope>RNA-BINDING</scope>
    <source>
        <tissue>Neuroblastoma</tissue>
    </source>
</reference>
<reference key="2">
    <citation type="journal article" date="2004" name="Nature">
        <title>DNA sequence and analysis of human chromosome 9.</title>
        <authorList>
            <person name="Humphray S.J."/>
            <person name="Oliver K."/>
            <person name="Hunt A.R."/>
            <person name="Plumb R.W."/>
            <person name="Loveland J.E."/>
            <person name="Howe K.L."/>
            <person name="Andrews T.D."/>
            <person name="Searle S."/>
            <person name="Hunt S.E."/>
            <person name="Scott C.E."/>
            <person name="Jones M.C."/>
            <person name="Ainscough R."/>
            <person name="Almeida J.P."/>
            <person name="Ambrose K.D."/>
            <person name="Ashwell R.I.S."/>
            <person name="Babbage A.K."/>
            <person name="Babbage S."/>
            <person name="Bagguley C.L."/>
            <person name="Bailey J."/>
            <person name="Banerjee R."/>
            <person name="Barker D.J."/>
            <person name="Barlow K.F."/>
            <person name="Bates K."/>
            <person name="Beasley H."/>
            <person name="Beasley O."/>
            <person name="Bird C.P."/>
            <person name="Bray-Allen S."/>
            <person name="Brown A.J."/>
            <person name="Brown J.Y."/>
            <person name="Burford D."/>
            <person name="Burrill W."/>
            <person name="Burton J."/>
            <person name="Carder C."/>
            <person name="Carter N.P."/>
            <person name="Chapman J.C."/>
            <person name="Chen Y."/>
            <person name="Clarke G."/>
            <person name="Clark S.Y."/>
            <person name="Clee C.M."/>
            <person name="Clegg S."/>
            <person name="Collier R.E."/>
            <person name="Corby N."/>
            <person name="Crosier M."/>
            <person name="Cummings A.T."/>
            <person name="Davies J."/>
            <person name="Dhami P."/>
            <person name="Dunn M."/>
            <person name="Dutta I."/>
            <person name="Dyer L.W."/>
            <person name="Earthrowl M.E."/>
            <person name="Faulkner L."/>
            <person name="Fleming C.J."/>
            <person name="Frankish A."/>
            <person name="Frankland J.A."/>
            <person name="French L."/>
            <person name="Fricker D.G."/>
            <person name="Garner P."/>
            <person name="Garnett J."/>
            <person name="Ghori J."/>
            <person name="Gilbert J.G.R."/>
            <person name="Glison C."/>
            <person name="Grafham D.V."/>
            <person name="Gribble S."/>
            <person name="Griffiths C."/>
            <person name="Griffiths-Jones S."/>
            <person name="Grocock R."/>
            <person name="Guy J."/>
            <person name="Hall R.E."/>
            <person name="Hammond S."/>
            <person name="Harley J.L."/>
            <person name="Harrison E.S.I."/>
            <person name="Hart E.A."/>
            <person name="Heath P.D."/>
            <person name="Henderson C.D."/>
            <person name="Hopkins B.L."/>
            <person name="Howard P.J."/>
            <person name="Howden P.J."/>
            <person name="Huckle E."/>
            <person name="Johnson C."/>
            <person name="Johnson D."/>
            <person name="Joy A.A."/>
            <person name="Kay M."/>
            <person name="Keenan S."/>
            <person name="Kershaw J.K."/>
            <person name="Kimberley A.M."/>
            <person name="King A."/>
            <person name="Knights A."/>
            <person name="Laird G.K."/>
            <person name="Langford C."/>
            <person name="Lawlor S."/>
            <person name="Leongamornlert D.A."/>
            <person name="Leversha M."/>
            <person name="Lloyd C."/>
            <person name="Lloyd D.M."/>
            <person name="Lovell J."/>
            <person name="Martin S."/>
            <person name="Mashreghi-Mohammadi M."/>
            <person name="Matthews L."/>
            <person name="McLaren S."/>
            <person name="McLay K.E."/>
            <person name="McMurray A."/>
            <person name="Milne S."/>
            <person name="Nickerson T."/>
            <person name="Nisbett J."/>
            <person name="Nordsiek G."/>
            <person name="Pearce A.V."/>
            <person name="Peck A.I."/>
            <person name="Porter K.M."/>
            <person name="Pandian R."/>
            <person name="Pelan S."/>
            <person name="Phillimore B."/>
            <person name="Povey S."/>
            <person name="Ramsey Y."/>
            <person name="Rand V."/>
            <person name="Scharfe M."/>
            <person name="Sehra H.K."/>
            <person name="Shownkeen R."/>
            <person name="Sims S.K."/>
            <person name="Skuce C.D."/>
            <person name="Smith M."/>
            <person name="Steward C.A."/>
            <person name="Swarbreck D."/>
            <person name="Sycamore N."/>
            <person name="Tester J."/>
            <person name="Thorpe A."/>
            <person name="Tracey A."/>
            <person name="Tromans A."/>
            <person name="Thomas D.W."/>
            <person name="Wall M."/>
            <person name="Wallis J.M."/>
            <person name="West A.P."/>
            <person name="Whitehead S.L."/>
            <person name="Willey D.L."/>
            <person name="Williams S.A."/>
            <person name="Wilming L."/>
            <person name="Wray P.W."/>
            <person name="Young L."/>
            <person name="Ashurst J.L."/>
            <person name="Coulson A."/>
            <person name="Blocker H."/>
            <person name="Durbin R.M."/>
            <person name="Sulston J.E."/>
            <person name="Hubbard T."/>
            <person name="Jackson M.J."/>
            <person name="Bentley D.R."/>
            <person name="Beck S."/>
            <person name="Rogers J."/>
            <person name="Dunham I."/>
        </authorList>
    </citation>
    <scope>NUCLEOTIDE SEQUENCE [LARGE SCALE GENOMIC DNA]</scope>
</reference>
<reference key="3">
    <citation type="submission" date="2005-07" db="EMBL/GenBank/DDBJ databases">
        <authorList>
            <person name="Mural R.J."/>
            <person name="Istrail S."/>
            <person name="Sutton G.G."/>
            <person name="Florea L."/>
            <person name="Halpern A.L."/>
            <person name="Mobarry C.M."/>
            <person name="Lippert R."/>
            <person name="Walenz B."/>
            <person name="Shatkay H."/>
            <person name="Dew I."/>
            <person name="Miller J.R."/>
            <person name="Flanigan M.J."/>
            <person name="Edwards N.J."/>
            <person name="Bolanos R."/>
            <person name="Fasulo D."/>
            <person name="Halldorsson B.V."/>
            <person name="Hannenhalli S."/>
            <person name="Turner R."/>
            <person name="Yooseph S."/>
            <person name="Lu F."/>
            <person name="Nusskern D.R."/>
            <person name="Shue B.C."/>
            <person name="Zheng X.H."/>
            <person name="Zhong F."/>
            <person name="Delcher A.L."/>
            <person name="Huson D.H."/>
            <person name="Kravitz S.A."/>
            <person name="Mouchard L."/>
            <person name="Reinert K."/>
            <person name="Remington K.A."/>
            <person name="Clark A.G."/>
            <person name="Waterman M.S."/>
            <person name="Eichler E.E."/>
            <person name="Adams M.D."/>
            <person name="Hunkapiller M.W."/>
            <person name="Myers E.W."/>
            <person name="Venter J.C."/>
        </authorList>
    </citation>
    <scope>NUCLEOTIDE SEQUENCE [LARGE SCALE GENOMIC DNA]</scope>
</reference>
<reference key="4">
    <citation type="journal article" date="2004" name="Genome Res.">
        <title>The status, quality, and expansion of the NIH full-length cDNA project: the Mammalian Gene Collection (MGC).</title>
        <authorList>
            <consortium name="The MGC Project Team"/>
        </authorList>
    </citation>
    <scope>NUCLEOTIDE SEQUENCE [LARGE SCALE MRNA] (ISOFORM 2)</scope>
    <source>
        <tissue>Testis</tissue>
    </source>
</reference>
<reference key="5">
    <citation type="journal article" date="2002" name="Am. J. Hum. Genet.">
        <title>3-methylglutaconic aciduria type I is caused by mutations in AUH.</title>
        <authorList>
            <person name="Ijlst L."/>
            <person name="Loupatty F.J."/>
            <person name="Ruiter J.P.N."/>
            <person name="Duran M."/>
            <person name="Lehnert W."/>
            <person name="Wanders R.J.A."/>
        </authorList>
    </citation>
    <scope>DISEASE</scope>
    <scope>FUNCTION</scope>
    <scope>CATALYTIC ACTIVITY</scope>
</reference>
<reference key="6">
    <citation type="journal article" date="2011" name="BMC Syst. Biol.">
        <title>Initial characterization of the human central proteome.</title>
        <authorList>
            <person name="Burkard T.R."/>
            <person name="Planyavsky M."/>
            <person name="Kaupe I."/>
            <person name="Breitwieser F.P."/>
            <person name="Buerckstuemmer T."/>
            <person name="Bennett K.L."/>
            <person name="Superti-Furga G."/>
            <person name="Colinge J."/>
        </authorList>
    </citation>
    <scope>IDENTIFICATION BY MASS SPECTROMETRY [LARGE SCALE ANALYSIS]</scope>
</reference>
<reference key="7">
    <citation type="journal article" date="2014" name="J. Proteomics">
        <title>An enzyme assisted RP-RPLC approach for in-depth analysis of human liver phosphoproteome.</title>
        <authorList>
            <person name="Bian Y."/>
            <person name="Song C."/>
            <person name="Cheng K."/>
            <person name="Dong M."/>
            <person name="Wang F."/>
            <person name="Huang J."/>
            <person name="Sun D."/>
            <person name="Wang L."/>
            <person name="Ye M."/>
            <person name="Zou H."/>
        </authorList>
    </citation>
    <scope>IDENTIFICATION BY MASS SPECTROMETRY [LARGE SCALE ANALYSIS]</scope>
    <source>
        <tissue>Liver</tissue>
    </source>
</reference>
<reference key="8">
    <citation type="journal article" date="2015" name="Proteomics">
        <title>N-terminome analysis of the human mitochondrial proteome.</title>
        <authorList>
            <person name="Vaca Jacome A.S."/>
            <person name="Rabilloud T."/>
            <person name="Schaeffer-Reiss C."/>
            <person name="Rompais M."/>
            <person name="Ayoub D."/>
            <person name="Lane L."/>
            <person name="Bairoch A."/>
            <person name="Van Dorsselaer A."/>
            <person name="Carapito C."/>
        </authorList>
    </citation>
    <scope>IDENTIFICATION BY MASS SPECTROMETRY [LARGE SCALE ANALYSIS]</scope>
</reference>
<reference key="9">
    <citation type="journal article" date="2006" name="FEBS J.">
        <title>Biochemical characterization of human 3-methylglutaconyl-CoA hydratase and its role in leucine metabolism.</title>
        <authorList>
            <person name="Mack M."/>
            <person name="Schniegler-Mattox U."/>
            <person name="Peters V."/>
            <person name="Hoffmann G.F."/>
            <person name="Liesert M."/>
            <person name="Buckel W."/>
            <person name="Zschocke J."/>
        </authorList>
    </citation>
    <scope>FUNCTION</scope>
    <scope>CATALYTIC ACTIVITY</scope>
    <scope>PATHWAY</scope>
    <scope>BIOPHYSICOCHEMICAL PROPERTIES</scope>
    <scope>CHARACTERIZATION OF VARIANT MGCA1 VAL-240</scope>
</reference>
<reference key="10">
    <citation type="journal article" date="2017" name="Cell">
        <title>The human knockout gene CLYBL connects itaconate to vitamin B12.</title>
        <authorList>
            <person name="Shen H."/>
            <person name="Campanello G.C."/>
            <person name="Flicker D."/>
            <person name="Grabarek Z."/>
            <person name="Hu J."/>
            <person name="Luo C."/>
            <person name="Banerjee R."/>
            <person name="Mootha V.K."/>
        </authorList>
    </citation>
    <scope>FUNCTION</scope>
    <scope>CATALYTIC ACTIVITY</scope>
</reference>
<reference key="11">
    <citation type="journal article" date="2001" name="Structure">
        <title>Crystal structure of human AUH protein, a single-stranded RNA binding homolog of enoyl-CoA hydratase.</title>
        <authorList>
            <person name="Kurimoto K."/>
            <person name="Fukai S."/>
            <person name="Nureki O."/>
            <person name="Muto Y."/>
            <person name="Yokoyama S."/>
        </authorList>
    </citation>
    <scope>X-RAY CRYSTALLOGRAPHY (2.2 ANGSTROMS) OF 75-339</scope>
    <scope>HEXAMERIZATION</scope>
    <scope>FUNCTION</scope>
    <scope>MUTAGENESIS OF LYS-105; LYS-109 AND LYS-113</scope>
</reference>
<reference key="12">
    <citation type="journal article" date="2003" name="Hum. Mutat.">
        <title>Mutations in the AUH gene cause 3-methylglutaconic aciduria type I.</title>
        <authorList>
            <person name="Ly T.B.N."/>
            <person name="Peters V."/>
            <person name="Gibson K.M."/>
            <person name="Liesert M."/>
            <person name="Buckel W."/>
            <person name="Wilcken B."/>
            <person name="Carpenter K."/>
            <person name="Ensenauer R."/>
            <person name="Hoffmann G.F."/>
            <person name="Mack M."/>
            <person name="Zschocke J."/>
        </authorList>
    </citation>
    <scope>VARIANT MGCA1 VAL-240</scope>
    <scope>FUNCTION</scope>
</reference>
<sequence>MAAAVAAAPGALGSLHAGGARLVAACSAWLCPGLRLPGSLAGRRAGPAIWAQGWVPAAGGPAPKRGYSSEMKTEDELRVRHLEEENRGIVVLGINRAYGKNSLSKNLIKMLSKAVDALKSDKKVRTIIIRSEVPGIFCAGADLKERAKMSSSEVGPFVSKIRAVINDIANLPVPTIAAIDGLALGGGLELALACDIRVAASSAKMGLVETKLAIIPGGGGTQRLPRAIGMSLAKELIFSARVLDGKEAKAVGLISHVLEQNQEGDAAYRKALDLAREFLPQGPVAMRVAKLAINQGMEVDLVTGLAIEEACYAQTIPTKDRLEGLLAFKEKRPPRYKGE</sequence>
<organism>
    <name type="scientific">Homo sapiens</name>
    <name type="common">Human</name>
    <dbReference type="NCBI Taxonomy" id="9606"/>
    <lineage>
        <taxon>Eukaryota</taxon>
        <taxon>Metazoa</taxon>
        <taxon>Chordata</taxon>
        <taxon>Craniata</taxon>
        <taxon>Vertebrata</taxon>
        <taxon>Euteleostomi</taxon>
        <taxon>Mammalia</taxon>
        <taxon>Eutheria</taxon>
        <taxon>Euarchontoglires</taxon>
        <taxon>Primates</taxon>
        <taxon>Haplorrhini</taxon>
        <taxon>Catarrhini</taxon>
        <taxon>Hominidae</taxon>
        <taxon>Homo</taxon>
    </lineage>
</organism>
<gene>
    <name type="primary">AUH</name>
</gene>